<organism>
    <name type="scientific">Saccharolobus islandicus (strain M.16.27)</name>
    <name type="common">Sulfolobus islandicus</name>
    <dbReference type="NCBI Taxonomy" id="427318"/>
    <lineage>
        <taxon>Archaea</taxon>
        <taxon>Thermoproteota</taxon>
        <taxon>Thermoprotei</taxon>
        <taxon>Sulfolobales</taxon>
        <taxon>Sulfolobaceae</taxon>
        <taxon>Saccharolobus</taxon>
    </lineage>
</organism>
<proteinExistence type="inferred from homology"/>
<name>AATD_SACI3</name>
<comment type="function">
    <text evidence="1">Component of the A-type ATP synthase that produces ATP from ADP in the presence of a proton gradient across the membrane.</text>
</comment>
<comment type="subunit">
    <text evidence="1">Has multiple subunits with at least A(3), B(3), C, D, E, F, H, I and proteolipid K(x).</text>
</comment>
<comment type="subcellular location">
    <subcellularLocation>
        <location evidence="1">Cell membrane</location>
        <topology evidence="1">Peripheral membrane protein</topology>
    </subcellularLocation>
</comment>
<comment type="similarity">
    <text evidence="1">Belongs to the V-ATPase D subunit family.</text>
</comment>
<gene>
    <name evidence="1" type="primary">atpD</name>
    <name type="ordered locus">M1627_1680</name>
</gene>
<reference key="1">
    <citation type="journal article" date="2009" name="Proc. Natl. Acad. Sci. U.S.A.">
        <title>Biogeography of the Sulfolobus islandicus pan-genome.</title>
        <authorList>
            <person name="Reno M.L."/>
            <person name="Held N.L."/>
            <person name="Fields C.J."/>
            <person name="Burke P.V."/>
            <person name="Whitaker R.J."/>
        </authorList>
    </citation>
    <scope>NUCLEOTIDE SEQUENCE [LARGE SCALE GENOMIC DNA]</scope>
    <source>
        <strain>M.16.27</strain>
    </source>
</reference>
<sequence length="213" mass="24963">MSQKVLPTKINLIQFRRQLRLITVIKRLLENKREVLLLYLRTYASEYEKIYNEVNEEMKKVYESYLQAVASEGISNIEEIALSQKPSLEVSSSIKVIFGVKVPTIKLDKSTIPPKPFSDVETSPYLSESYEEMTEALNKIIELVELESTIRSLVSELRKTQRLINSIDNYILPFYRGSIKFIKQILEDRQREEFSRLKIIRRILQRRRESGSG</sequence>
<protein>
    <recommendedName>
        <fullName evidence="1">A-type ATP synthase subunit D</fullName>
    </recommendedName>
</protein>
<accession>C3N6D3</accession>
<feature type="chain" id="PRO_1000209791" description="A-type ATP synthase subunit D">
    <location>
        <begin position="1"/>
        <end position="213"/>
    </location>
</feature>
<keyword id="KW-0066">ATP synthesis</keyword>
<keyword id="KW-1003">Cell membrane</keyword>
<keyword id="KW-0375">Hydrogen ion transport</keyword>
<keyword id="KW-0406">Ion transport</keyword>
<keyword id="KW-0472">Membrane</keyword>
<keyword id="KW-0813">Transport</keyword>
<evidence type="ECO:0000255" key="1">
    <source>
        <dbReference type="HAMAP-Rule" id="MF_00271"/>
    </source>
</evidence>
<dbReference type="EMBL" id="CP001401">
    <property type="protein sequence ID" value="ACP55558.1"/>
    <property type="molecule type" value="Genomic_DNA"/>
</dbReference>
<dbReference type="RefSeq" id="WP_012711557.1">
    <property type="nucleotide sequence ID" value="NC_012632.1"/>
</dbReference>
<dbReference type="SMR" id="C3N6D3"/>
<dbReference type="KEGG" id="sim:M1627_1680"/>
<dbReference type="HOGENOM" id="CLU_069688_2_2_2"/>
<dbReference type="Proteomes" id="UP000002307">
    <property type="component" value="Chromosome"/>
</dbReference>
<dbReference type="GO" id="GO:0005886">
    <property type="term" value="C:plasma membrane"/>
    <property type="evidence" value="ECO:0007669"/>
    <property type="project" value="UniProtKB-SubCell"/>
</dbReference>
<dbReference type="GO" id="GO:0005524">
    <property type="term" value="F:ATP binding"/>
    <property type="evidence" value="ECO:0007669"/>
    <property type="project" value="UniProtKB-UniRule"/>
</dbReference>
<dbReference type="GO" id="GO:0046933">
    <property type="term" value="F:proton-transporting ATP synthase activity, rotational mechanism"/>
    <property type="evidence" value="ECO:0007669"/>
    <property type="project" value="UniProtKB-UniRule"/>
</dbReference>
<dbReference type="GO" id="GO:0046961">
    <property type="term" value="F:proton-transporting ATPase activity, rotational mechanism"/>
    <property type="evidence" value="ECO:0007669"/>
    <property type="project" value="InterPro"/>
</dbReference>
<dbReference type="GO" id="GO:0042777">
    <property type="term" value="P:proton motive force-driven plasma membrane ATP synthesis"/>
    <property type="evidence" value="ECO:0007669"/>
    <property type="project" value="UniProtKB-UniRule"/>
</dbReference>
<dbReference type="FunFam" id="1.10.287.3240:FF:000012">
    <property type="entry name" value="V-type ATP synthase subunit D"/>
    <property type="match status" value="1"/>
</dbReference>
<dbReference type="Gene3D" id="1.10.287.3240">
    <property type="match status" value="1"/>
</dbReference>
<dbReference type="HAMAP" id="MF_00271">
    <property type="entry name" value="ATP_synth_D_arch"/>
    <property type="match status" value="1"/>
</dbReference>
<dbReference type="InterPro" id="IPR002699">
    <property type="entry name" value="V_ATPase_D"/>
</dbReference>
<dbReference type="NCBIfam" id="NF001544">
    <property type="entry name" value="PRK00373.1-3"/>
    <property type="match status" value="1"/>
</dbReference>
<dbReference type="NCBIfam" id="TIGR00309">
    <property type="entry name" value="V_ATPase_subD"/>
    <property type="match status" value="1"/>
</dbReference>
<dbReference type="PANTHER" id="PTHR11671">
    <property type="entry name" value="V-TYPE ATP SYNTHASE SUBUNIT D"/>
    <property type="match status" value="1"/>
</dbReference>
<dbReference type="Pfam" id="PF01813">
    <property type="entry name" value="ATP-synt_D"/>
    <property type="match status" value="1"/>
</dbReference>